<evidence type="ECO:0000256" key="1">
    <source>
        <dbReference type="SAM" id="MobiDB-lite"/>
    </source>
</evidence>
<evidence type="ECO:0000269" key="2">
    <source>
    </source>
</evidence>
<evidence type="ECO:0000269" key="3">
    <source>
    </source>
</evidence>
<evidence type="ECO:0000269" key="4">
    <source>
    </source>
</evidence>
<evidence type="ECO:0000269" key="5">
    <source>
    </source>
</evidence>
<evidence type="ECO:0000269" key="6">
    <source>
    </source>
</evidence>
<evidence type="ECO:0000269" key="7">
    <source>
    </source>
</evidence>
<evidence type="ECO:0000305" key="8"/>
<evidence type="ECO:0007829" key="9">
    <source>
        <dbReference type="PDB" id="4KRD"/>
    </source>
</evidence>
<organism>
    <name type="scientific">Saccharomyces cerevisiae (strain ATCC 204508 / S288c)</name>
    <name type="common">Baker's yeast</name>
    <dbReference type="NCBI Taxonomy" id="559292"/>
    <lineage>
        <taxon>Eukaryota</taxon>
        <taxon>Fungi</taxon>
        <taxon>Dikarya</taxon>
        <taxon>Ascomycota</taxon>
        <taxon>Saccharomycotina</taxon>
        <taxon>Saccharomycetes</taxon>
        <taxon>Saccharomycetales</taxon>
        <taxon>Saccharomycetaceae</taxon>
        <taxon>Saccharomyces</taxon>
    </lineage>
</organism>
<protein>
    <recommendedName>
        <fullName>PHO85 cyclin-10</fullName>
    </recommendedName>
</protein>
<gene>
    <name type="primary">PCL10</name>
    <name type="ordered locus">YGL134W</name>
    <name type="ORF">G2838</name>
</gene>
<reference key="1">
    <citation type="journal article" date="1996" name="Yeast">
        <title>Sequence analysis of a 14.6 kb DNA fragment of Saccharomyces cerevisiae chromosome VII reveals SEC27, SSM1b, a putative S-adenosylmethionine-dependent enzyme and six new open reading frames.</title>
        <authorList>
            <person name="Escribano V."/>
            <person name="Eraso P."/>
            <person name="Portillo F."/>
            <person name="Mazon M.J."/>
        </authorList>
    </citation>
    <scope>NUCLEOTIDE SEQUENCE [GENOMIC DNA]</scope>
    <source>
        <strain>ATCC 96604 / S288c / FY1679</strain>
    </source>
</reference>
<reference key="2">
    <citation type="journal article" date="1997" name="Nature">
        <title>The nucleotide sequence of Saccharomyces cerevisiae chromosome VII.</title>
        <authorList>
            <person name="Tettelin H."/>
            <person name="Agostoni-Carbone M.L."/>
            <person name="Albermann K."/>
            <person name="Albers M."/>
            <person name="Arroyo J."/>
            <person name="Backes U."/>
            <person name="Barreiros T."/>
            <person name="Bertani I."/>
            <person name="Bjourson A.J."/>
            <person name="Brueckner M."/>
            <person name="Bruschi C.V."/>
            <person name="Carignani G."/>
            <person name="Castagnoli L."/>
            <person name="Cerdan E."/>
            <person name="Clemente M.L."/>
            <person name="Coblenz A."/>
            <person name="Coglievina M."/>
            <person name="Coissac E."/>
            <person name="Defoor E."/>
            <person name="Del Bino S."/>
            <person name="Delius H."/>
            <person name="Delneri D."/>
            <person name="de Wergifosse P."/>
            <person name="Dujon B."/>
            <person name="Durand P."/>
            <person name="Entian K.-D."/>
            <person name="Eraso P."/>
            <person name="Escribano V."/>
            <person name="Fabiani L."/>
            <person name="Fartmann B."/>
            <person name="Feroli F."/>
            <person name="Feuermann M."/>
            <person name="Frontali L."/>
            <person name="Garcia-Gonzalez M."/>
            <person name="Garcia-Saez M.I."/>
            <person name="Goffeau A."/>
            <person name="Guerreiro P."/>
            <person name="Hani J."/>
            <person name="Hansen M."/>
            <person name="Hebling U."/>
            <person name="Hernandez K."/>
            <person name="Heumann K."/>
            <person name="Hilger F."/>
            <person name="Hofmann B."/>
            <person name="Indge K.J."/>
            <person name="James C.M."/>
            <person name="Klima R."/>
            <person name="Koetter P."/>
            <person name="Kramer B."/>
            <person name="Kramer W."/>
            <person name="Lauquin G."/>
            <person name="Leuther H."/>
            <person name="Louis E.J."/>
            <person name="Maillier E."/>
            <person name="Marconi A."/>
            <person name="Martegani E."/>
            <person name="Mazon M.J."/>
            <person name="Mazzoni C."/>
            <person name="McReynolds A.D.K."/>
            <person name="Melchioretto P."/>
            <person name="Mewes H.-W."/>
            <person name="Minenkova O."/>
            <person name="Mueller-Auer S."/>
            <person name="Nawrocki A."/>
            <person name="Netter P."/>
            <person name="Neu R."/>
            <person name="Nombela C."/>
            <person name="Oliver S.G."/>
            <person name="Panzeri L."/>
            <person name="Paoluzi S."/>
            <person name="Plevani P."/>
            <person name="Portetelle D."/>
            <person name="Portillo F."/>
            <person name="Potier S."/>
            <person name="Purnelle B."/>
            <person name="Rieger M."/>
            <person name="Riles L."/>
            <person name="Rinaldi T."/>
            <person name="Robben J."/>
            <person name="Rodrigues-Pousada C."/>
            <person name="Rodriguez-Belmonte E."/>
            <person name="Rodriguez-Torres A.M."/>
            <person name="Rose M."/>
            <person name="Ruzzi M."/>
            <person name="Saliola M."/>
            <person name="Sanchez-Perez M."/>
            <person name="Schaefer B."/>
            <person name="Schaefer M."/>
            <person name="Scharfe M."/>
            <person name="Schmidheini T."/>
            <person name="Schreer A."/>
            <person name="Skala J."/>
            <person name="Souciet J.-L."/>
            <person name="Steensma H.Y."/>
            <person name="Talla E."/>
            <person name="Thierry A."/>
            <person name="Vandenbol M."/>
            <person name="van der Aart Q.J.M."/>
            <person name="Van Dyck L."/>
            <person name="Vanoni M."/>
            <person name="Verhasselt P."/>
            <person name="Voet M."/>
            <person name="Volckaert G."/>
            <person name="Wambutt R."/>
            <person name="Watson M.D."/>
            <person name="Weber N."/>
            <person name="Wedler E."/>
            <person name="Wedler H."/>
            <person name="Wipfli P."/>
            <person name="Wolf K."/>
            <person name="Wright L.F."/>
            <person name="Zaccaria P."/>
            <person name="Zimmermann M."/>
            <person name="Zollner A."/>
            <person name="Kleine K."/>
        </authorList>
    </citation>
    <scope>NUCLEOTIDE SEQUENCE [LARGE SCALE GENOMIC DNA]</scope>
    <source>
        <strain>ATCC 204508 / S288c</strain>
    </source>
</reference>
<reference key="3">
    <citation type="journal article" date="2014" name="G3 (Bethesda)">
        <title>The reference genome sequence of Saccharomyces cerevisiae: Then and now.</title>
        <authorList>
            <person name="Engel S.R."/>
            <person name="Dietrich F.S."/>
            <person name="Fisk D.G."/>
            <person name="Binkley G."/>
            <person name="Balakrishnan R."/>
            <person name="Costanzo M.C."/>
            <person name="Dwight S.S."/>
            <person name="Hitz B.C."/>
            <person name="Karra K."/>
            <person name="Nash R.S."/>
            <person name="Weng S."/>
            <person name="Wong E.D."/>
            <person name="Lloyd P."/>
            <person name="Skrzypek M.S."/>
            <person name="Miyasato S.R."/>
            <person name="Simison M."/>
            <person name="Cherry J.M."/>
        </authorList>
    </citation>
    <scope>GENOME REANNOTATION</scope>
    <source>
        <strain>ATCC 204508 / S288c</strain>
    </source>
</reference>
<reference key="4">
    <citation type="journal article" date="1997" name="Mol. Cell. Biol.">
        <title>A family of cyclin-like proteins that interact with the Pho85 cyclin-dependent kinase.</title>
        <authorList>
            <person name="Measday V."/>
            <person name="Moore L."/>
            <person name="Retnakaran R."/>
            <person name="Lee J."/>
            <person name="Donoviel M."/>
            <person name="Neiman A.M."/>
            <person name="Andrews B.J."/>
        </authorList>
    </citation>
    <scope>INTERACTION WITH PHO85</scope>
</reference>
<reference key="5">
    <citation type="journal article" date="1998" name="Mol. Cell. Biol.">
        <title>Cyclin partners determine Pho85 protein kinase substrate specificity in vitro and in vivo: control of glycogen biosynthesis by Pcl8 and Pcl10.</title>
        <authorList>
            <person name="Huang D."/>
            <person name="Moffat J."/>
            <person name="Wilson W.A."/>
            <person name="Moore L."/>
            <person name="Cheng C."/>
            <person name="Roach P.J."/>
            <person name="Andrews B.J."/>
        </authorList>
    </citation>
    <scope>FUNCTION</scope>
    <scope>PHOSPHORYLATION OF GSY2</scope>
    <scope>INTERACTION WITH GSY2</scope>
</reference>
<reference key="6">
    <citation type="journal article" date="1999" name="Mol. Cell. Biol.">
        <title>Substrate targeting of the yeast cyclin-dependent kinase Pho85p by the cyclin Pcl10p.</title>
        <authorList>
            <person name="Wilson W.A."/>
            <person name="Mahrenholz A.M."/>
            <person name="Roach P.J."/>
        </authorList>
    </citation>
    <scope>FUNCTION</scope>
    <scope>INTERACTION WITH GSY2 AND PHO85</scope>
</reference>
<reference key="7">
    <citation type="journal article" date="2003" name="J. Biol. Chem.">
        <title>Pho85 phosphorylates the Glc7 protein phosphatase regulator Glc8 in vivo.</title>
        <authorList>
            <person name="Tan Y.S.H."/>
            <person name="Morcos P.A."/>
            <person name="Cannon J.F."/>
        </authorList>
    </citation>
    <scope>FUNCTION</scope>
</reference>
<reference key="8">
    <citation type="journal article" date="2003" name="Nature">
        <title>Global analysis of protein localization in budding yeast.</title>
        <authorList>
            <person name="Huh W.-K."/>
            <person name="Falvo J.V."/>
            <person name="Gerke L.C."/>
            <person name="Carroll A.S."/>
            <person name="Howson R.W."/>
            <person name="Weissman J.S."/>
            <person name="O'Shea E.K."/>
        </authorList>
    </citation>
    <scope>SUBCELLULAR LOCATION [LARGE SCALE ANALYSIS]</scope>
</reference>
<reference key="9">
    <citation type="journal article" date="2003" name="Nature">
        <title>Global analysis of protein expression in yeast.</title>
        <authorList>
            <person name="Ghaemmaghami S."/>
            <person name="Huh W.-K."/>
            <person name="Bower K."/>
            <person name="Howson R.W."/>
            <person name="Belle A."/>
            <person name="Dephoure N."/>
            <person name="O'Shea E.K."/>
            <person name="Weissman J.S."/>
        </authorList>
    </citation>
    <scope>LEVEL OF PROTEIN EXPRESSION [LARGE SCALE ANALYSIS]</scope>
</reference>
<sequence>MDMTKNHTTDTEEFDDGDIRPVSLGIVDDYNASFELPLKPKFLQSENFSDLTSEWDQSRSNTPGLAEGKTEKAQPCGTTDSSKNRIHVEQLLESANEMNNYLAQNIENINNFQVGLLNGGKGLYSSMGDDSSACINGTNFSSTSNFELSDDELEDTTGCTSSIFDKDLFHQQNGLSIPRRRSPLFKSPTASFEIGDATDVEEQDIDDSIFSECSSITSFDMGGLHISLPHDEEEDQEKTKSESENPLLHGIPVDVEVPHISVDEALANFKETIELLLKLSGNRKCTGFNTRVEKKEYSNFYMKSKPTLSSADFLKRIQDKCEYQPTVYLVATFLIDTLFLTRDGNNILQLKLNLQEKEVHRMIIAAVRLSTKLLEDFVHSHEYFSKVCGISKRLLTKLEVSLLICVCNTKLMVSNRKLAASKLLLNELRSFCV</sequence>
<feature type="chain" id="PRO_0000202740" description="PHO85 cyclin-10">
    <location>
        <begin position="1"/>
        <end position="433"/>
    </location>
</feature>
<feature type="region of interest" description="Disordered" evidence="1">
    <location>
        <begin position="1"/>
        <end position="20"/>
    </location>
</feature>
<feature type="region of interest" description="Disordered" evidence="1">
    <location>
        <begin position="51"/>
        <end position="81"/>
    </location>
</feature>
<feature type="compositionally biased region" description="Basic and acidic residues" evidence="1">
    <location>
        <begin position="1"/>
        <end position="10"/>
    </location>
</feature>
<feature type="compositionally biased region" description="Polar residues" evidence="1">
    <location>
        <begin position="51"/>
        <end position="63"/>
    </location>
</feature>
<feature type="helix" evidence="9">
    <location>
        <begin position="246"/>
        <end position="248"/>
    </location>
</feature>
<feature type="helix" evidence="9">
    <location>
        <begin position="262"/>
        <end position="280"/>
    </location>
</feature>
<feature type="helix" evidence="9">
    <location>
        <begin position="291"/>
        <end position="298"/>
    </location>
</feature>
<feature type="helix" evidence="9">
    <location>
        <begin position="310"/>
        <end position="321"/>
    </location>
</feature>
<feature type="helix" evidence="9">
    <location>
        <begin position="325"/>
        <end position="339"/>
    </location>
</feature>
<feature type="strand" evidence="9">
    <location>
        <begin position="340"/>
        <end position="342"/>
    </location>
</feature>
<feature type="strand" evidence="9">
    <location>
        <begin position="348"/>
        <end position="350"/>
    </location>
</feature>
<feature type="helix" evidence="9">
    <location>
        <begin position="356"/>
        <end position="358"/>
    </location>
</feature>
<feature type="helix" evidence="9">
    <location>
        <begin position="359"/>
        <end position="374"/>
    </location>
</feature>
<feature type="helix" evidence="9">
    <location>
        <begin position="381"/>
        <end position="388"/>
    </location>
</feature>
<feature type="helix" evidence="9">
    <location>
        <begin position="392"/>
        <end position="406"/>
    </location>
</feature>
<feature type="helix" evidence="9">
    <location>
        <begin position="415"/>
        <end position="429"/>
    </location>
</feature>
<keyword id="KW-0002">3D-structure</keyword>
<keyword id="KW-0119">Carbohydrate metabolism</keyword>
<keyword id="KW-0195">Cyclin</keyword>
<keyword id="KW-0963">Cytoplasm</keyword>
<keyword id="KW-0321">Glycogen metabolism</keyword>
<keyword id="KW-1185">Reference proteome</keyword>
<name>PCL10_YEAST</name>
<comment type="function">
    <text evidence="2 3 7">Cyclin partner of the cyclin-dependent kinase (CDK) PHO85. Together with cyclin PCL8, negatively controls glycogen accumulation under favorable growth conditions. The PCL10-PHO85 cyclin-CDK holoenzyme has glycogen synthase kinase activity and phosphorylates and negatively regulates glycogen synthase GSY2. Also has minor GLC8 kinase activity.</text>
</comment>
<comment type="subunit">
    <text evidence="2 6 7">Forms a cyclin-CDK complex with PHO85. Interacts with GSY2, independent of the presence of PHO85.</text>
</comment>
<comment type="interaction">
    <interactant intactId="EBI-23973">
        <id>P53124</id>
    </interactant>
    <interactant intactId="EBI-13327">
        <id>P17157</id>
        <label>PHO85</label>
    </interactant>
    <organismsDiffer>false</organismsDiffer>
    <experiments>7</experiments>
</comment>
<comment type="subcellular location">
    <subcellularLocation>
        <location evidence="4">Cytoplasm</location>
    </subcellularLocation>
</comment>
<comment type="miscellaneous">
    <text evidence="5">Present with 217 molecules/cell in log phase SD medium.</text>
</comment>
<comment type="similarity">
    <text evidence="8">Belongs to the cyclin family. PHO80 subfamily.</text>
</comment>
<proteinExistence type="evidence at protein level"/>
<dbReference type="EMBL" id="Z72656">
    <property type="protein sequence ID" value="CAA96845.1"/>
    <property type="molecule type" value="Genomic_DNA"/>
</dbReference>
<dbReference type="EMBL" id="BK006941">
    <property type="protein sequence ID" value="DAA07976.1"/>
    <property type="molecule type" value="Genomic_DNA"/>
</dbReference>
<dbReference type="PIR" id="S64147">
    <property type="entry name" value="S64147"/>
</dbReference>
<dbReference type="RefSeq" id="NP_011381.1">
    <property type="nucleotide sequence ID" value="NM_001180999.1"/>
</dbReference>
<dbReference type="PDB" id="4KRC">
    <property type="method" value="X-ray"/>
    <property type="resolution" value="2.60 A"/>
    <property type="chains" value="B=227-433"/>
</dbReference>
<dbReference type="PDB" id="4KRD">
    <property type="method" value="X-ray"/>
    <property type="resolution" value="1.95 A"/>
    <property type="chains" value="B=227-433"/>
</dbReference>
<dbReference type="PDBsum" id="4KRC"/>
<dbReference type="PDBsum" id="4KRD"/>
<dbReference type="SMR" id="P53124"/>
<dbReference type="BioGRID" id="33118">
    <property type="interactions" value="56"/>
</dbReference>
<dbReference type="ComplexPortal" id="CPX-1692">
    <property type="entry name" value="PCL10-PHO85 kinase complex"/>
</dbReference>
<dbReference type="DIP" id="DIP-1494N"/>
<dbReference type="FunCoup" id="P53124">
    <property type="interactions" value="79"/>
</dbReference>
<dbReference type="IntAct" id="P53124">
    <property type="interactions" value="14"/>
</dbReference>
<dbReference type="MINT" id="P53124"/>
<dbReference type="STRING" id="4932.YGL134W"/>
<dbReference type="iPTMnet" id="P53124"/>
<dbReference type="PaxDb" id="4932-YGL134W"/>
<dbReference type="PeptideAtlas" id="P53124"/>
<dbReference type="EnsemblFungi" id="YGL134W_mRNA">
    <property type="protein sequence ID" value="YGL134W"/>
    <property type="gene ID" value="YGL134W"/>
</dbReference>
<dbReference type="GeneID" id="852743"/>
<dbReference type="KEGG" id="sce:YGL134W"/>
<dbReference type="AGR" id="SGD:S000003102"/>
<dbReference type="SGD" id="S000003102">
    <property type="gene designation" value="PCL10"/>
</dbReference>
<dbReference type="VEuPathDB" id="FungiDB:YGL134W"/>
<dbReference type="eggNOG" id="KOG1674">
    <property type="taxonomic scope" value="Eukaryota"/>
</dbReference>
<dbReference type="GeneTree" id="ENSGT00390000000862"/>
<dbReference type="HOGENOM" id="CLU_043984_0_0_1"/>
<dbReference type="InParanoid" id="P53124"/>
<dbReference type="OMA" id="DSIFSEC"/>
<dbReference type="OrthoDB" id="5304883at2759"/>
<dbReference type="BioCyc" id="YEAST:G3O-30629-MONOMER"/>
<dbReference type="SABIO-RK" id="P53124"/>
<dbReference type="BioGRID-ORCS" id="852743">
    <property type="hits" value="0 hits in 10 CRISPR screens"/>
</dbReference>
<dbReference type="EvolutionaryTrace" id="P53124"/>
<dbReference type="PRO" id="PR:P53124"/>
<dbReference type="Proteomes" id="UP000002311">
    <property type="component" value="Chromosome VII"/>
</dbReference>
<dbReference type="RNAct" id="P53124">
    <property type="molecule type" value="protein"/>
</dbReference>
<dbReference type="GO" id="GO:0000307">
    <property type="term" value="C:cyclin-dependent protein kinase holoenzyme complex"/>
    <property type="evidence" value="ECO:0000353"/>
    <property type="project" value="ComplexPortal"/>
</dbReference>
<dbReference type="GO" id="GO:0005737">
    <property type="term" value="C:cytoplasm"/>
    <property type="evidence" value="ECO:0007669"/>
    <property type="project" value="UniProtKB-SubCell"/>
</dbReference>
<dbReference type="GO" id="GO:0005634">
    <property type="term" value="C:nucleus"/>
    <property type="evidence" value="ECO:0000318"/>
    <property type="project" value="GO_Central"/>
</dbReference>
<dbReference type="GO" id="GO:0016538">
    <property type="term" value="F:cyclin-dependent protein serine/threonine kinase regulator activity"/>
    <property type="evidence" value="ECO:0000314"/>
    <property type="project" value="SGD"/>
</dbReference>
<dbReference type="GO" id="GO:0019901">
    <property type="term" value="F:protein kinase binding"/>
    <property type="evidence" value="ECO:0007669"/>
    <property type="project" value="InterPro"/>
</dbReference>
<dbReference type="GO" id="GO:0005977">
    <property type="term" value="P:glycogen metabolic process"/>
    <property type="evidence" value="ECO:0007669"/>
    <property type="project" value="UniProtKB-KW"/>
</dbReference>
<dbReference type="GO" id="GO:0045719">
    <property type="term" value="P:negative regulation of glycogen biosynthetic process"/>
    <property type="evidence" value="ECO:0000315"/>
    <property type="project" value="SGD"/>
</dbReference>
<dbReference type="GO" id="GO:0005979">
    <property type="term" value="P:regulation of glycogen biosynthetic process"/>
    <property type="evidence" value="ECO:0000303"/>
    <property type="project" value="ComplexPortal"/>
</dbReference>
<dbReference type="CDD" id="cd20558">
    <property type="entry name" value="CYCLIN_ScPCL7-like"/>
    <property type="match status" value="1"/>
</dbReference>
<dbReference type="Gene3D" id="1.10.472.10">
    <property type="entry name" value="Cyclin-like"/>
    <property type="match status" value="1"/>
</dbReference>
<dbReference type="InterPro" id="IPR013922">
    <property type="entry name" value="Cyclin_PHO80-like"/>
</dbReference>
<dbReference type="PANTHER" id="PTHR15615">
    <property type="match status" value="1"/>
</dbReference>
<dbReference type="PANTHER" id="PTHR15615:SF123">
    <property type="entry name" value="PHO85 CYCLIN-10-RELATED"/>
    <property type="match status" value="1"/>
</dbReference>
<dbReference type="Pfam" id="PF08613">
    <property type="entry name" value="Cyclin"/>
    <property type="match status" value="1"/>
</dbReference>
<accession>P53124</accession>
<accession>D6VU15</accession>